<organism>
    <name type="scientific">Arabidopsis thaliana</name>
    <name type="common">Mouse-ear cress</name>
    <dbReference type="NCBI Taxonomy" id="3702"/>
    <lineage>
        <taxon>Eukaryota</taxon>
        <taxon>Viridiplantae</taxon>
        <taxon>Streptophyta</taxon>
        <taxon>Embryophyta</taxon>
        <taxon>Tracheophyta</taxon>
        <taxon>Spermatophyta</taxon>
        <taxon>Magnoliopsida</taxon>
        <taxon>eudicotyledons</taxon>
        <taxon>Gunneridae</taxon>
        <taxon>Pentapetalae</taxon>
        <taxon>rosids</taxon>
        <taxon>malvids</taxon>
        <taxon>Brassicales</taxon>
        <taxon>Brassicaceae</taxon>
        <taxon>Camelineae</taxon>
        <taxon>Arabidopsis</taxon>
    </lineage>
</organism>
<dbReference type="EC" id="7.1.2.2"/>
<dbReference type="EMBL" id="JF729200">
    <property type="protein sequence ID" value="AEK01255.1"/>
    <property type="molecule type" value="Genomic_DNA"/>
</dbReference>
<dbReference type="EMBL" id="JF729201">
    <property type="protein sequence ID" value="AEK01291.1"/>
    <property type="molecule type" value="Genomic_DNA"/>
</dbReference>
<dbReference type="EMBL" id="JF729202">
    <property type="protein sequence ID" value="AEK01312.1"/>
    <property type="molecule type" value="Genomic_DNA"/>
</dbReference>
<dbReference type="EMBL" id="Y08501">
    <property type="protein sequence ID" value="CAA69732.1"/>
    <property type="molecule type" value="Genomic_DNA"/>
</dbReference>
<dbReference type="EMBL" id="BK010421">
    <property type="protein sequence ID" value="DAB41514.1"/>
    <property type="molecule type" value="Genomic_DNA"/>
</dbReference>
<dbReference type="EMBL" id="AC007729">
    <property type="protein sequence ID" value="AAM15504.1"/>
    <property type="molecule type" value="Genomic_DNA"/>
</dbReference>
<dbReference type="EMBL" id="CP002685">
    <property type="protein sequence ID" value="AEC06095.1"/>
    <property type="molecule type" value="Genomic_DNA"/>
</dbReference>
<dbReference type="EMBL" id="DQ069799">
    <property type="protein sequence ID" value="AAY82258.1"/>
    <property type="molecule type" value="mRNA"/>
</dbReference>
<dbReference type="EMBL" id="BT026104">
    <property type="protein sequence ID" value="ABG48460.1"/>
    <property type="molecule type" value="mRNA"/>
</dbReference>
<dbReference type="RefSeq" id="NP_085508.1">
    <property type="nucleotide sequence ID" value="NC_001284.2"/>
</dbReference>
<dbReference type="RefSeq" id="NP_178793.1">
    <property type="nucleotide sequence ID" value="NM_126751.1"/>
</dbReference>
<dbReference type="SMR" id="P93303"/>
<dbReference type="BioGRID" id="771">
    <property type="interactions" value="1"/>
</dbReference>
<dbReference type="FunCoup" id="P93303">
    <property type="interactions" value="20"/>
</dbReference>
<dbReference type="IntAct" id="P93303">
    <property type="interactions" value="2"/>
</dbReference>
<dbReference type="STRING" id="3702.P93303"/>
<dbReference type="iPTMnet" id="P93303"/>
<dbReference type="PaxDb" id="3702-AT2G07707.1"/>
<dbReference type="EnsemblPlants" id="AT2G07707.1">
    <property type="protein sequence ID" value="AT2G07707.1"/>
    <property type="gene ID" value="AT2G07707"/>
</dbReference>
<dbReference type="EnsemblPlants" id="ATMG00480.1">
    <property type="protein sequence ID" value="ATMG00480.1"/>
    <property type="gene ID" value="ATMG00480"/>
</dbReference>
<dbReference type="GeneID" id="815382"/>
<dbReference type="Gramene" id="AT2G07707.1">
    <property type="protein sequence ID" value="AT2G07707.1"/>
    <property type="gene ID" value="AT2G07707"/>
</dbReference>
<dbReference type="Gramene" id="ATMG00480.1">
    <property type="protein sequence ID" value="ATMG00480.1"/>
    <property type="gene ID" value="ATMG00480"/>
</dbReference>
<dbReference type="KEGG" id="ath:AT2G07707"/>
<dbReference type="Araport" id="AT2G07707"/>
<dbReference type="Araport" id="ATMG00480"/>
<dbReference type="TAIR" id="AT2G07707"/>
<dbReference type="TAIR" id="ATMG00480">
    <property type="gene designation" value="ORFB"/>
</dbReference>
<dbReference type="eggNOG" id="ENOG502RXRI">
    <property type="taxonomic scope" value="Eukaryota"/>
</dbReference>
<dbReference type="HOGENOM" id="CLU_1920741_0_0_1"/>
<dbReference type="InParanoid" id="P93303"/>
<dbReference type="OMA" id="WVITCRN"/>
<dbReference type="OrthoDB" id="1879916at2759"/>
<dbReference type="PhylomeDB" id="P93303"/>
<dbReference type="BioCyc" id="ARA:AT2G07707-MONOMER"/>
<dbReference type="BioCyc" id="ARA:ATMG00480-MONOMER"/>
<dbReference type="PRO" id="PR:P93303"/>
<dbReference type="Proteomes" id="UP000006548">
    <property type="component" value="Chromosome 2"/>
</dbReference>
<dbReference type="Proteomes" id="UP000006548">
    <property type="component" value="Mitochondrion MT"/>
</dbReference>
<dbReference type="ExpressionAtlas" id="P93303">
    <property type="expression patterns" value="baseline"/>
</dbReference>
<dbReference type="GO" id="GO:0031966">
    <property type="term" value="C:mitochondrial membrane"/>
    <property type="evidence" value="ECO:0007669"/>
    <property type="project" value="UniProtKB-SubCell"/>
</dbReference>
<dbReference type="GO" id="GO:0005739">
    <property type="term" value="C:mitochondrion"/>
    <property type="evidence" value="ECO:0000314"/>
    <property type="project" value="TAIR"/>
</dbReference>
<dbReference type="GO" id="GO:0000325">
    <property type="term" value="C:plant-type vacuole"/>
    <property type="evidence" value="ECO:0007005"/>
    <property type="project" value="TAIR"/>
</dbReference>
<dbReference type="GO" id="GO:0045259">
    <property type="term" value="C:proton-transporting ATP synthase complex"/>
    <property type="evidence" value="ECO:0007669"/>
    <property type="project" value="UniProtKB-KW"/>
</dbReference>
<dbReference type="GO" id="GO:0005524">
    <property type="term" value="F:ATP binding"/>
    <property type="evidence" value="ECO:0007669"/>
    <property type="project" value="UniProtKB-KW"/>
</dbReference>
<dbReference type="GO" id="GO:0050897">
    <property type="term" value="F:cobalt ion binding"/>
    <property type="evidence" value="ECO:0007005"/>
    <property type="project" value="TAIR"/>
</dbReference>
<dbReference type="GO" id="GO:0006754">
    <property type="term" value="P:ATP biosynthetic process"/>
    <property type="evidence" value="ECO:0007669"/>
    <property type="project" value="UniProtKB-KW"/>
</dbReference>
<dbReference type="GO" id="GO:1902600">
    <property type="term" value="P:proton transmembrane transport"/>
    <property type="evidence" value="ECO:0007669"/>
    <property type="project" value="UniProtKB-KW"/>
</dbReference>
<dbReference type="InterPro" id="IPR009455">
    <property type="entry name" value="YMF19"/>
</dbReference>
<dbReference type="InterPro" id="IPR044975">
    <property type="entry name" value="YMF19-like"/>
</dbReference>
<dbReference type="InterPro" id="IPR003319">
    <property type="entry name" value="YMF19-like_N"/>
</dbReference>
<dbReference type="PANTHER" id="PTHR36816">
    <property type="entry name" value="ATP SYNTHASE PROTEIN YMF19"/>
    <property type="match status" value="1"/>
</dbReference>
<dbReference type="PANTHER" id="PTHR36816:SF1">
    <property type="entry name" value="ATP SYNTHASE PROTEIN YMF19"/>
    <property type="match status" value="1"/>
</dbReference>
<dbReference type="Pfam" id="PF02326">
    <property type="entry name" value="YMF19"/>
    <property type="match status" value="1"/>
</dbReference>
<dbReference type="Pfam" id="PF06449">
    <property type="entry name" value="YMF19_C"/>
    <property type="match status" value="1"/>
</dbReference>
<keyword id="KW-0066">ATP synthesis</keyword>
<keyword id="KW-0067">ATP-binding</keyword>
<keyword id="KW-0138">CF(0)</keyword>
<keyword id="KW-0375">Hydrogen ion transport</keyword>
<keyword id="KW-0406">Ion transport</keyword>
<keyword id="KW-0472">Membrane</keyword>
<keyword id="KW-0496">Mitochondrion</keyword>
<keyword id="KW-0547">Nucleotide-binding</keyword>
<keyword id="KW-1185">Reference proteome</keyword>
<keyword id="KW-1278">Translocase</keyword>
<keyword id="KW-0812">Transmembrane</keyword>
<keyword id="KW-1133">Transmembrane helix</keyword>
<keyword id="KW-0813">Transport</keyword>
<name>YMF19_ARATH</name>
<geneLocation type="mitochondrion"/>
<protein>
    <recommendedName>
        <fullName>ATP synthase protein YMF19</fullName>
        <ecNumber>7.1.2.2</ecNumber>
    </recommendedName>
    <alternativeName>
        <fullName>Mitochondrial protein YMF19</fullName>
    </alternativeName>
</protein>
<comment type="function">
    <text>This is one of the chains of the nonenzymatic component (CF(0) subunit) of the mitochondrial ATPase complex.</text>
</comment>
<comment type="catalytic activity">
    <reaction>
        <text>ATP + H2O + 4 H(+)(in) = ADP + phosphate + 5 H(+)(out)</text>
        <dbReference type="Rhea" id="RHEA:57720"/>
        <dbReference type="ChEBI" id="CHEBI:15377"/>
        <dbReference type="ChEBI" id="CHEBI:15378"/>
        <dbReference type="ChEBI" id="CHEBI:30616"/>
        <dbReference type="ChEBI" id="CHEBI:43474"/>
        <dbReference type="ChEBI" id="CHEBI:456216"/>
        <dbReference type="EC" id="7.1.2.2"/>
    </reaction>
</comment>
<comment type="subunit">
    <text evidence="1">F-type ATPases have 2 components, CF(1) - the catalytic core - and CF(0) - the membrane proton channel. CF(1) has five subunits: alpha(3), beta(3), gamma(1), delta(1), epsilon(1). CF(0) has three main subunits: a, b and c (By similarity).</text>
</comment>
<comment type="subcellular location">
    <subcellularLocation>
        <location evidence="3">Mitochondrion membrane</location>
        <topology evidence="3">Single-pass membrane protein</topology>
    </subcellularLocation>
</comment>
<comment type="miscellaneous">
    <text>A stretch of 270 kb of the mitochondrial genome is duplicated within the centromere of chromosome 2 resulting in the duplication of the gene. The expression of this duplicated gene (At2g07707) is demonstrated.</text>
</comment>
<comment type="similarity">
    <text evidence="4">Belongs to the ATPase protein YMF19 family.</text>
</comment>
<reference key="1">
    <citation type="journal article" date="2011" name="BMC Biol.">
        <title>Double-strand break repair processes drive evolution of the mitochondrial genome in Arabidopsis.</title>
        <authorList>
            <person name="Davila J.I."/>
            <person name="Arrieta-Montiel M.P."/>
            <person name="Wamboldt Y."/>
            <person name="Cao J."/>
            <person name="Hagmann J."/>
            <person name="Shedge V."/>
            <person name="Xu Y.Z."/>
            <person name="Weigel D."/>
            <person name="Mackenzie S.A."/>
        </authorList>
    </citation>
    <scope>NUCLEOTIDE SEQUENCE [GENOMIC DNA]</scope>
    <source>
        <strain>cv. C24</strain>
        <strain>cv. Columbia</strain>
        <strain>cv. Landsberg erecta</strain>
    </source>
</reference>
<reference key="2">
    <citation type="journal article" date="1997" name="Nat. Genet.">
        <title>The mitochondrial genome of Arabidopsis thaliana contains 57 genes in 366,924 nucleotides.</title>
        <authorList>
            <person name="Unseld M."/>
            <person name="Marienfeld J.R."/>
            <person name="Brandt P."/>
            <person name="Brennicke A."/>
        </authorList>
    </citation>
    <scope>NUCLEOTIDE SEQUENCE [LARGE SCALE GENOMIC DNA]</scope>
    <source>
        <strain>cv. C24</strain>
    </source>
</reference>
<reference key="3">
    <citation type="journal article" date="2018" name="Plant Cell">
        <title>Correction of persistent errors in Arabidopsis reference mitochondrial genomes.</title>
        <authorList>
            <person name="Sloan D.B."/>
            <person name="Wu Z."/>
            <person name="Sharbrough J."/>
        </authorList>
    </citation>
    <scope>NUCLEOTIDE SEQUENCE [LARGE SCALE GENOMIC DNA]</scope>
    <source>
        <strain>cv. Columbia</strain>
    </source>
</reference>
<reference key="4">
    <citation type="journal article" date="1999" name="Nature">
        <title>Sequence and analysis of chromosome 2 of the plant Arabidopsis thaliana.</title>
        <authorList>
            <person name="Lin X."/>
            <person name="Kaul S."/>
            <person name="Rounsley S.D."/>
            <person name="Shea T.P."/>
            <person name="Benito M.-I."/>
            <person name="Town C.D."/>
            <person name="Fujii C.Y."/>
            <person name="Mason T.M."/>
            <person name="Bowman C.L."/>
            <person name="Barnstead M.E."/>
            <person name="Feldblyum T.V."/>
            <person name="Buell C.R."/>
            <person name="Ketchum K.A."/>
            <person name="Lee J.J."/>
            <person name="Ronning C.M."/>
            <person name="Koo H.L."/>
            <person name="Moffat K.S."/>
            <person name="Cronin L.A."/>
            <person name="Shen M."/>
            <person name="Pai G."/>
            <person name="Van Aken S."/>
            <person name="Umayam L."/>
            <person name="Tallon L.J."/>
            <person name="Gill J.E."/>
            <person name="Adams M.D."/>
            <person name="Carrera A.J."/>
            <person name="Creasy T.H."/>
            <person name="Goodman H.M."/>
            <person name="Somerville C.R."/>
            <person name="Copenhaver G.P."/>
            <person name="Preuss D."/>
            <person name="Nierman W.C."/>
            <person name="White O."/>
            <person name="Eisen J.A."/>
            <person name="Salzberg S.L."/>
            <person name="Fraser C.M."/>
            <person name="Venter J.C."/>
        </authorList>
    </citation>
    <scope>NUCLEOTIDE SEQUENCE [LARGE SCALE GENOMIC DNA] (AT2G07707)</scope>
    <source>
        <strain>cv. Columbia</strain>
    </source>
</reference>
<reference key="5">
    <citation type="journal article" date="2017" name="Plant J.">
        <title>Araport11: a complete reannotation of the Arabidopsis thaliana reference genome.</title>
        <authorList>
            <person name="Cheng C.Y."/>
            <person name="Krishnakumar V."/>
            <person name="Chan A.P."/>
            <person name="Thibaud-Nissen F."/>
            <person name="Schobel S."/>
            <person name="Town C.D."/>
        </authorList>
    </citation>
    <scope>GENOME REANNOTATION (AT2G07707)</scope>
    <source>
        <strain>cv. Columbia</strain>
    </source>
</reference>
<reference key="6">
    <citation type="journal article" date="2005" name="Plant Physiol.">
        <title>Analysis of the cDNAs of hypothetical genes on Arabidopsis chromosome 2 reveals numerous transcript variants.</title>
        <authorList>
            <person name="Xiao Y.-L."/>
            <person name="Smith S.R."/>
            <person name="Ishmael N."/>
            <person name="Redman J.C."/>
            <person name="Kumar N."/>
            <person name="Monaghan E.L."/>
            <person name="Ayele M."/>
            <person name="Haas B.J."/>
            <person name="Wu H.C."/>
            <person name="Town C.D."/>
        </authorList>
    </citation>
    <scope>NUCLEOTIDE SEQUENCE [LARGE SCALE MRNA] (AT2G07707)</scope>
    <source>
        <strain>cv. Columbia</strain>
    </source>
</reference>
<reference key="7">
    <citation type="submission" date="2006-07" db="EMBL/GenBank/DDBJ databases">
        <title>Arabidopsis ORF clones.</title>
        <authorList>
            <person name="Kim C.J."/>
            <person name="Chen H."/>
            <person name="Quinitio C."/>
            <person name="Shinn P."/>
            <person name="Ecker J.R."/>
        </authorList>
    </citation>
    <scope>NUCLEOTIDE SEQUENCE [LARGE SCALE MRNA] (AT2G07707)</scope>
    <source>
        <strain>cv. Columbia</strain>
    </source>
</reference>
<reference key="8">
    <citation type="journal article" date="2003" name="FEBS Lett.">
        <title>The products of the mitochondrial orf25 and orfB genes are F(0) components in the plant F(1)F(0) ATP synthase.</title>
        <authorList>
            <person name="Heazlewood J.L."/>
            <person name="Whelan J."/>
            <person name="Millar A.H."/>
        </authorList>
    </citation>
    <scope>IDENTIFICATION BY MASS SPECTROMETRY</scope>
    <scope>SUBUNIT</scope>
</reference>
<reference key="9">
    <citation type="journal article" date="2004" name="Plant Cell">
        <title>Experimental analysis of the Arabidopsis mitochondrial proteome highlights signaling and regulatory components, provides assessment of targeting prediction programs, and indicates plant-specific mitochondrial proteins.</title>
        <authorList>
            <person name="Heazlewood J.L."/>
            <person name="Tonti-Filippini J.S."/>
            <person name="Gout A.M."/>
            <person name="Day D.A."/>
            <person name="Whelan J."/>
            <person name="Millar A.H."/>
        </authorList>
    </citation>
    <scope>IDENTIFICATION BY MASS SPECTROMETRY</scope>
    <scope>SUBCELLULAR LOCATION [LARGE SCALE ANALYSIS]</scope>
    <source>
        <strain>cv. Landsberg erecta</strain>
    </source>
</reference>
<gene>
    <name type="primary">YMF19</name>
    <name type="synonym">ATP8</name>
    <name evidence="6" type="ordered locus">AtMg00480</name>
</gene>
<gene>
    <name evidence="5" type="ordered locus">At2g07707</name>
</gene>
<accession>P93303</accession>
<accession>G1C2R4</accession>
<accession>Q4PL89</accession>
<feature type="chain" id="PRO_0000196841" description="ATP synthase protein YMF19">
    <location>
        <begin position="1"/>
        <end position="158"/>
    </location>
</feature>
<feature type="transmembrane region" description="Helical" evidence="2">
    <location>
        <begin position="7"/>
        <end position="27"/>
    </location>
</feature>
<sequence>MPQLDKFTYFSQFFWLCLFFFTFYIFICNDGDGVLGISRILKLRNQLLSHRGKTIRSKDPNSLEDLLRKGFSTGVSYMYASLFEVSQWCKAVDLLGKRRKITLISCFGEISGSRGMERNILYNISKSSPSNTGRWITCRNCRNDIMLIHVVHGQGSIK</sequence>
<evidence type="ECO:0000250" key="1"/>
<evidence type="ECO:0000255" key="2"/>
<evidence type="ECO:0000269" key="3">
    <source>
    </source>
</evidence>
<evidence type="ECO:0000305" key="4"/>
<evidence type="ECO:0000312" key="5">
    <source>
        <dbReference type="Araport" id="AT2G07707"/>
    </source>
</evidence>
<evidence type="ECO:0000312" key="6">
    <source>
        <dbReference type="Araport" id="ATMG00480"/>
    </source>
</evidence>
<proteinExistence type="evidence at protein level"/>